<sequence>MAKQKKHPQGNIAQNKKALHDYFIEQKFEAGLALSGWEVKSLRAGKAQLVDSYVLLKDGEAWLMGSHITPLKTASTHVIADPTRTRKLLLHKRELGRLFGSVQQKGYACVALSLYWKKHLIKCEIALAKGKKEYDKRDTEKARDSDREIQRAIRSKGKED</sequence>
<evidence type="ECO:0000255" key="1">
    <source>
        <dbReference type="HAMAP-Rule" id="MF_00023"/>
    </source>
</evidence>
<evidence type="ECO:0000256" key="2">
    <source>
        <dbReference type="SAM" id="MobiDB-lite"/>
    </source>
</evidence>
<reference key="1">
    <citation type="journal article" date="2009" name="J. Bacteriol.">
        <title>Genome sequence of Azotobacter vinelandii, an obligate aerobe specialized to support diverse anaerobic metabolic processes.</title>
        <authorList>
            <person name="Setubal J.C."/>
            <person name="Dos Santos P."/>
            <person name="Goldman B.S."/>
            <person name="Ertesvaag H."/>
            <person name="Espin G."/>
            <person name="Rubio L.M."/>
            <person name="Valla S."/>
            <person name="Almeida N.F."/>
            <person name="Balasubramanian D."/>
            <person name="Cromes L."/>
            <person name="Curatti L."/>
            <person name="Du Z."/>
            <person name="Godsy E."/>
            <person name="Goodner B."/>
            <person name="Hellner-Burris K."/>
            <person name="Hernandez J.A."/>
            <person name="Houmiel K."/>
            <person name="Imperial J."/>
            <person name="Kennedy C."/>
            <person name="Larson T.J."/>
            <person name="Latreille P."/>
            <person name="Ligon L.S."/>
            <person name="Lu J."/>
            <person name="Maerk M."/>
            <person name="Miller N.M."/>
            <person name="Norton S."/>
            <person name="O'Carroll I.P."/>
            <person name="Paulsen I."/>
            <person name="Raulfs E.C."/>
            <person name="Roemer R."/>
            <person name="Rosser J."/>
            <person name="Segura D."/>
            <person name="Slater S."/>
            <person name="Stricklin S.L."/>
            <person name="Studholme D.J."/>
            <person name="Sun J."/>
            <person name="Viana C.J."/>
            <person name="Wallin E."/>
            <person name="Wang B."/>
            <person name="Wheeler C."/>
            <person name="Zhu H."/>
            <person name="Dean D.R."/>
            <person name="Dixon R."/>
            <person name="Wood D."/>
        </authorList>
    </citation>
    <scope>NUCLEOTIDE SEQUENCE [LARGE SCALE GENOMIC DNA]</scope>
    <source>
        <strain>DJ / ATCC BAA-1303</strain>
    </source>
</reference>
<accession>C1DFN0</accession>
<organism>
    <name type="scientific">Azotobacter vinelandii (strain DJ / ATCC BAA-1303)</name>
    <dbReference type="NCBI Taxonomy" id="322710"/>
    <lineage>
        <taxon>Bacteria</taxon>
        <taxon>Pseudomonadati</taxon>
        <taxon>Pseudomonadota</taxon>
        <taxon>Gammaproteobacteria</taxon>
        <taxon>Pseudomonadales</taxon>
        <taxon>Pseudomonadaceae</taxon>
        <taxon>Azotobacter</taxon>
    </lineage>
</organism>
<dbReference type="EMBL" id="CP001157">
    <property type="protein sequence ID" value="ACO80426.1"/>
    <property type="molecule type" value="Genomic_DNA"/>
</dbReference>
<dbReference type="RefSeq" id="WP_012702794.1">
    <property type="nucleotide sequence ID" value="NC_012560.1"/>
</dbReference>
<dbReference type="SMR" id="C1DFN0"/>
<dbReference type="STRING" id="322710.Avin_43050"/>
<dbReference type="EnsemblBacteria" id="ACO80426">
    <property type="protein sequence ID" value="ACO80426"/>
    <property type="gene ID" value="Avin_43050"/>
</dbReference>
<dbReference type="GeneID" id="88187219"/>
<dbReference type="KEGG" id="avn:Avin_43050"/>
<dbReference type="eggNOG" id="COG0691">
    <property type="taxonomic scope" value="Bacteria"/>
</dbReference>
<dbReference type="HOGENOM" id="CLU_108953_3_0_6"/>
<dbReference type="OrthoDB" id="9805462at2"/>
<dbReference type="Proteomes" id="UP000002424">
    <property type="component" value="Chromosome"/>
</dbReference>
<dbReference type="GO" id="GO:0005829">
    <property type="term" value="C:cytosol"/>
    <property type="evidence" value="ECO:0007669"/>
    <property type="project" value="TreeGrafter"/>
</dbReference>
<dbReference type="GO" id="GO:0003723">
    <property type="term" value="F:RNA binding"/>
    <property type="evidence" value="ECO:0007669"/>
    <property type="project" value="UniProtKB-UniRule"/>
</dbReference>
<dbReference type="GO" id="GO:0070929">
    <property type="term" value="P:trans-translation"/>
    <property type="evidence" value="ECO:0007669"/>
    <property type="project" value="UniProtKB-UniRule"/>
</dbReference>
<dbReference type="CDD" id="cd09294">
    <property type="entry name" value="SmpB"/>
    <property type="match status" value="1"/>
</dbReference>
<dbReference type="Gene3D" id="2.40.280.10">
    <property type="match status" value="1"/>
</dbReference>
<dbReference type="HAMAP" id="MF_00023">
    <property type="entry name" value="SmpB"/>
    <property type="match status" value="1"/>
</dbReference>
<dbReference type="InterPro" id="IPR023620">
    <property type="entry name" value="SmpB"/>
</dbReference>
<dbReference type="InterPro" id="IPR000037">
    <property type="entry name" value="SsrA-bd_prot"/>
</dbReference>
<dbReference type="InterPro" id="IPR020081">
    <property type="entry name" value="SsrA-bd_prot_CS"/>
</dbReference>
<dbReference type="NCBIfam" id="NF003843">
    <property type="entry name" value="PRK05422.1"/>
    <property type="match status" value="1"/>
</dbReference>
<dbReference type="NCBIfam" id="TIGR00086">
    <property type="entry name" value="smpB"/>
    <property type="match status" value="1"/>
</dbReference>
<dbReference type="PANTHER" id="PTHR30308:SF2">
    <property type="entry name" value="SSRA-BINDING PROTEIN"/>
    <property type="match status" value="1"/>
</dbReference>
<dbReference type="PANTHER" id="PTHR30308">
    <property type="entry name" value="TMRNA-BINDING COMPONENT OF TRANS-TRANSLATION TAGGING COMPLEX"/>
    <property type="match status" value="1"/>
</dbReference>
<dbReference type="Pfam" id="PF01668">
    <property type="entry name" value="SmpB"/>
    <property type="match status" value="1"/>
</dbReference>
<dbReference type="SUPFAM" id="SSF74982">
    <property type="entry name" value="Small protein B (SmpB)"/>
    <property type="match status" value="1"/>
</dbReference>
<dbReference type="PROSITE" id="PS01317">
    <property type="entry name" value="SSRP"/>
    <property type="match status" value="1"/>
</dbReference>
<proteinExistence type="inferred from homology"/>
<comment type="function">
    <text evidence="1">Required for rescue of stalled ribosomes mediated by trans-translation. Binds to transfer-messenger RNA (tmRNA), required for stable association of tmRNA with ribosomes. tmRNA and SmpB together mimic tRNA shape, replacing the anticodon stem-loop with SmpB. tmRNA is encoded by the ssrA gene; the 2 termini fold to resemble tRNA(Ala) and it encodes a 'tag peptide', a short internal open reading frame. During trans-translation Ala-aminoacylated tmRNA acts like a tRNA, entering the A-site of stalled ribosomes, displacing the stalled mRNA. The ribosome then switches to translate the ORF on the tmRNA; the nascent peptide is terminated with the 'tag peptide' encoded by the tmRNA and targeted for degradation. The ribosome is freed to recommence translation, which seems to be the essential function of trans-translation.</text>
</comment>
<comment type="subcellular location">
    <subcellularLocation>
        <location evidence="1">Cytoplasm</location>
    </subcellularLocation>
    <text evidence="1">The tmRNA-SmpB complex associates with stalled 70S ribosomes.</text>
</comment>
<comment type="similarity">
    <text evidence="1">Belongs to the SmpB family.</text>
</comment>
<name>SSRP_AZOVD</name>
<protein>
    <recommendedName>
        <fullName evidence="1">SsrA-binding protein</fullName>
    </recommendedName>
    <alternativeName>
        <fullName evidence="1">Small protein B</fullName>
    </alternativeName>
</protein>
<keyword id="KW-0963">Cytoplasm</keyword>
<keyword id="KW-0694">RNA-binding</keyword>
<feature type="chain" id="PRO_1000201927" description="SsrA-binding protein">
    <location>
        <begin position="1"/>
        <end position="160"/>
    </location>
</feature>
<feature type="region of interest" description="Disordered" evidence="2">
    <location>
        <begin position="131"/>
        <end position="160"/>
    </location>
</feature>
<gene>
    <name evidence="1" type="primary">smpB</name>
    <name type="ordered locus">Avin_43050</name>
</gene>